<protein>
    <recommendedName>
        <fullName>Translation initiation factor eIF2B subunit gamma</fullName>
    </recommendedName>
    <alternativeName>
        <fullName>eIF2B GDP-GTP exchange factor subunit gamma</fullName>
    </alternativeName>
</protein>
<proteinExistence type="evidence at protein level"/>
<feature type="chain" id="PRO_0000156082" description="Translation initiation factor eIF2B subunit gamma">
    <location>
        <begin position="1"/>
        <end position="458"/>
    </location>
</feature>
<feature type="modified residue" description="Phosphoserine" evidence="1">
    <location>
        <position position="291"/>
    </location>
</feature>
<feature type="strand" evidence="10">
    <location>
        <begin position="33"/>
        <end position="35"/>
    </location>
</feature>
<feature type="strand" evidence="10">
    <location>
        <begin position="39"/>
        <end position="45"/>
    </location>
</feature>
<feature type="turn" evidence="10">
    <location>
        <begin position="52"/>
        <end position="54"/>
    </location>
</feature>
<feature type="strand" evidence="10">
    <location>
        <begin position="58"/>
        <end position="60"/>
    </location>
</feature>
<feature type="helix" evidence="10">
    <location>
        <begin position="62"/>
        <end position="64"/>
    </location>
</feature>
<feature type="strand" evidence="10">
    <location>
        <begin position="66"/>
        <end position="71"/>
    </location>
</feature>
<feature type="helix" evidence="10">
    <location>
        <begin position="74"/>
        <end position="82"/>
    </location>
</feature>
<feature type="strand" evidence="10">
    <location>
        <begin position="87"/>
        <end position="92"/>
    </location>
</feature>
<feature type="helix" evidence="12">
    <location>
        <begin position="94"/>
        <end position="96"/>
    </location>
</feature>
<feature type="helix" evidence="10">
    <location>
        <begin position="97"/>
        <end position="105"/>
    </location>
</feature>
<feature type="strand" evidence="10">
    <location>
        <begin position="112"/>
        <end position="117"/>
    </location>
</feature>
<feature type="helix" evidence="10">
    <location>
        <begin position="128"/>
        <end position="134"/>
    </location>
</feature>
<feature type="helix" evidence="10">
    <location>
        <begin position="136"/>
        <end position="138"/>
    </location>
</feature>
<feature type="strand" evidence="10">
    <location>
        <begin position="141"/>
        <end position="147"/>
    </location>
</feature>
<feature type="helix" evidence="10">
    <location>
        <begin position="156"/>
        <end position="166"/>
    </location>
</feature>
<feature type="strand" evidence="10">
    <location>
        <begin position="169"/>
        <end position="176"/>
    </location>
</feature>
<feature type="strand" evidence="10">
    <location>
        <begin position="196"/>
        <end position="199"/>
    </location>
</feature>
<feature type="turn" evidence="10">
    <location>
        <begin position="200"/>
        <end position="203"/>
    </location>
</feature>
<feature type="strand" evidence="10">
    <location>
        <begin position="204"/>
        <end position="207"/>
    </location>
</feature>
<feature type="strand" evidence="10">
    <location>
        <begin position="210"/>
        <end position="213"/>
    </location>
</feature>
<feature type="strand" evidence="10">
    <location>
        <begin position="216"/>
        <end position="221"/>
    </location>
</feature>
<feature type="turn" evidence="10">
    <location>
        <begin position="222"/>
        <end position="226"/>
    </location>
</feature>
<feature type="strand" evidence="10">
    <location>
        <begin position="230"/>
        <end position="245"/>
    </location>
</feature>
<feature type="helix" evidence="10">
    <location>
        <begin position="247"/>
        <end position="249"/>
    </location>
</feature>
<feature type="turn" evidence="10">
    <location>
        <begin position="250"/>
        <end position="252"/>
    </location>
</feature>
<feature type="strand" evidence="10">
    <location>
        <begin position="253"/>
        <end position="256"/>
    </location>
</feature>
<feature type="turn" evidence="10">
    <location>
        <begin position="261"/>
        <end position="266"/>
    </location>
</feature>
<feature type="turn" evidence="11">
    <location>
        <begin position="277"/>
        <end position="279"/>
    </location>
</feature>
<feature type="turn" evidence="12">
    <location>
        <begin position="284"/>
        <end position="289"/>
    </location>
</feature>
<feature type="strand" evidence="10">
    <location>
        <begin position="315"/>
        <end position="319"/>
    </location>
</feature>
<feature type="strand" evidence="10">
    <location>
        <begin position="321"/>
        <end position="323"/>
    </location>
</feature>
<feature type="helix" evidence="10">
    <location>
        <begin position="332"/>
        <end position="338"/>
    </location>
</feature>
<feature type="strand" evidence="10">
    <location>
        <begin position="353"/>
        <end position="360"/>
    </location>
</feature>
<feature type="strand" evidence="10">
    <location>
        <begin position="373"/>
        <end position="376"/>
    </location>
</feature>
<feature type="strand" evidence="10">
    <location>
        <begin position="390"/>
        <end position="393"/>
    </location>
</feature>
<feature type="strand" evidence="10">
    <location>
        <begin position="407"/>
        <end position="410"/>
    </location>
</feature>
<feature type="strand" evidence="10">
    <location>
        <begin position="424"/>
        <end position="427"/>
    </location>
</feature>
<feature type="strand" evidence="12">
    <location>
        <begin position="435"/>
        <end position="438"/>
    </location>
</feature>
<feature type="strand" evidence="10">
    <location>
        <begin position="441"/>
        <end position="443"/>
    </location>
</feature>
<accession>P56288</accession>
<reference key="1">
    <citation type="journal article" date="2002" name="Nature">
        <title>The genome sequence of Schizosaccharomyces pombe.</title>
        <authorList>
            <person name="Wood V."/>
            <person name="Gwilliam R."/>
            <person name="Rajandream M.A."/>
            <person name="Lyne M.H."/>
            <person name="Lyne R."/>
            <person name="Stewart A."/>
            <person name="Sgouros J.G."/>
            <person name="Peat N."/>
            <person name="Hayles J."/>
            <person name="Baker S.G."/>
            <person name="Basham D."/>
            <person name="Bowman S."/>
            <person name="Brooks K."/>
            <person name="Brown D."/>
            <person name="Brown S."/>
            <person name="Chillingworth T."/>
            <person name="Churcher C.M."/>
            <person name="Collins M."/>
            <person name="Connor R."/>
            <person name="Cronin A."/>
            <person name="Davis P."/>
            <person name="Feltwell T."/>
            <person name="Fraser A."/>
            <person name="Gentles S."/>
            <person name="Goble A."/>
            <person name="Hamlin N."/>
            <person name="Harris D.E."/>
            <person name="Hidalgo J."/>
            <person name="Hodgson G."/>
            <person name="Holroyd S."/>
            <person name="Hornsby T."/>
            <person name="Howarth S."/>
            <person name="Huckle E.J."/>
            <person name="Hunt S."/>
            <person name="Jagels K."/>
            <person name="James K.D."/>
            <person name="Jones L."/>
            <person name="Jones M."/>
            <person name="Leather S."/>
            <person name="McDonald S."/>
            <person name="McLean J."/>
            <person name="Mooney P."/>
            <person name="Moule S."/>
            <person name="Mungall K.L."/>
            <person name="Murphy L.D."/>
            <person name="Niblett D."/>
            <person name="Odell C."/>
            <person name="Oliver K."/>
            <person name="O'Neil S."/>
            <person name="Pearson D."/>
            <person name="Quail M.A."/>
            <person name="Rabbinowitsch E."/>
            <person name="Rutherford K.M."/>
            <person name="Rutter S."/>
            <person name="Saunders D."/>
            <person name="Seeger K."/>
            <person name="Sharp S."/>
            <person name="Skelton J."/>
            <person name="Simmonds M.N."/>
            <person name="Squares R."/>
            <person name="Squares S."/>
            <person name="Stevens K."/>
            <person name="Taylor K."/>
            <person name="Taylor R.G."/>
            <person name="Tivey A."/>
            <person name="Walsh S.V."/>
            <person name="Warren T."/>
            <person name="Whitehead S."/>
            <person name="Woodward J.R."/>
            <person name="Volckaert G."/>
            <person name="Aert R."/>
            <person name="Robben J."/>
            <person name="Grymonprez B."/>
            <person name="Weltjens I."/>
            <person name="Vanstreels E."/>
            <person name="Rieger M."/>
            <person name="Schaefer M."/>
            <person name="Mueller-Auer S."/>
            <person name="Gabel C."/>
            <person name="Fuchs M."/>
            <person name="Duesterhoeft A."/>
            <person name="Fritzc C."/>
            <person name="Holzer E."/>
            <person name="Moestl D."/>
            <person name="Hilbert H."/>
            <person name="Borzym K."/>
            <person name="Langer I."/>
            <person name="Beck A."/>
            <person name="Lehrach H."/>
            <person name="Reinhardt R."/>
            <person name="Pohl T.M."/>
            <person name="Eger P."/>
            <person name="Zimmermann W."/>
            <person name="Wedler H."/>
            <person name="Wambutt R."/>
            <person name="Purnelle B."/>
            <person name="Goffeau A."/>
            <person name="Cadieu E."/>
            <person name="Dreano S."/>
            <person name="Gloux S."/>
            <person name="Lelaure V."/>
            <person name="Mottier S."/>
            <person name="Galibert F."/>
            <person name="Aves S.J."/>
            <person name="Xiang Z."/>
            <person name="Hunt C."/>
            <person name="Moore K."/>
            <person name="Hurst S.M."/>
            <person name="Lucas M."/>
            <person name="Rochet M."/>
            <person name="Gaillardin C."/>
            <person name="Tallada V.A."/>
            <person name="Garzon A."/>
            <person name="Thode G."/>
            <person name="Daga R.R."/>
            <person name="Cruzado L."/>
            <person name="Jimenez J."/>
            <person name="Sanchez M."/>
            <person name="del Rey F."/>
            <person name="Benito J."/>
            <person name="Dominguez A."/>
            <person name="Revuelta J.L."/>
            <person name="Moreno S."/>
            <person name="Armstrong J."/>
            <person name="Forsburg S.L."/>
            <person name="Cerutti L."/>
            <person name="Lowe T."/>
            <person name="McCombie W.R."/>
            <person name="Paulsen I."/>
            <person name="Potashkin J."/>
            <person name="Shpakovski G.V."/>
            <person name="Ussery D."/>
            <person name="Barrell B.G."/>
            <person name="Nurse P."/>
        </authorList>
    </citation>
    <scope>NUCLEOTIDE SEQUENCE [LARGE SCALE GENOMIC DNA]</scope>
    <source>
        <strain>972 / ATCC 24843</strain>
    </source>
</reference>
<reference key="2">
    <citation type="journal article" date="2011" name="Science">
        <title>Comparative functional genomics of the fission yeasts.</title>
        <authorList>
            <person name="Rhind N."/>
            <person name="Chen Z."/>
            <person name="Yassour M."/>
            <person name="Thompson D.A."/>
            <person name="Haas B.J."/>
            <person name="Habib N."/>
            <person name="Wapinski I."/>
            <person name="Roy S."/>
            <person name="Lin M.F."/>
            <person name="Heiman D.I."/>
            <person name="Young S.K."/>
            <person name="Furuya K."/>
            <person name="Guo Y."/>
            <person name="Pidoux A."/>
            <person name="Chen H.M."/>
            <person name="Robbertse B."/>
            <person name="Goldberg J.M."/>
            <person name="Aoki K."/>
            <person name="Bayne E.H."/>
            <person name="Berlin A.M."/>
            <person name="Desjardins C.A."/>
            <person name="Dobbs E."/>
            <person name="Dukaj L."/>
            <person name="Fan L."/>
            <person name="FitzGerald M.G."/>
            <person name="French C."/>
            <person name="Gujja S."/>
            <person name="Hansen K."/>
            <person name="Keifenheim D."/>
            <person name="Levin J.Z."/>
            <person name="Mosher R.A."/>
            <person name="Mueller C.A."/>
            <person name="Pfiffner J."/>
            <person name="Priest M."/>
            <person name="Russ C."/>
            <person name="Smialowska A."/>
            <person name="Swoboda P."/>
            <person name="Sykes S.M."/>
            <person name="Vaughn M."/>
            <person name="Vengrova S."/>
            <person name="Yoder R."/>
            <person name="Zeng Q."/>
            <person name="Allshire R."/>
            <person name="Baulcombe D."/>
            <person name="Birren B.W."/>
            <person name="Brown W."/>
            <person name="Ekwall K."/>
            <person name="Kellis M."/>
            <person name="Leatherwood J."/>
            <person name="Levin H."/>
            <person name="Margalit H."/>
            <person name="Martienssen R."/>
            <person name="Nieduszynski C.A."/>
            <person name="Spatafora J.W."/>
            <person name="Friedman N."/>
            <person name="Dalgaard J.Z."/>
            <person name="Baumann P."/>
            <person name="Niki H."/>
            <person name="Regev A."/>
            <person name="Nusbaum C."/>
        </authorList>
    </citation>
    <scope>REVISION OF GENE MODEL</scope>
</reference>
<reference key="3">
    <citation type="journal article" date="2006" name="Nat. Biotechnol.">
        <title>ORFeome cloning and global analysis of protein localization in the fission yeast Schizosaccharomyces pombe.</title>
        <authorList>
            <person name="Matsuyama A."/>
            <person name="Arai R."/>
            <person name="Yashiroda Y."/>
            <person name="Shirai A."/>
            <person name="Kamata A."/>
            <person name="Sekido S."/>
            <person name="Kobayashi Y."/>
            <person name="Hashimoto A."/>
            <person name="Hamamoto M."/>
            <person name="Hiraoka Y."/>
            <person name="Horinouchi S."/>
            <person name="Yoshida M."/>
        </authorList>
    </citation>
    <scope>SUBCELLULAR LOCATION [LARGE SCALE ANALYSIS]</scope>
</reference>
<reference key="4">
    <citation type="journal article" date="2008" name="J. Proteome Res.">
        <title>Phosphoproteome analysis of fission yeast.</title>
        <authorList>
            <person name="Wilson-Grady J.T."/>
            <person name="Villen J."/>
            <person name="Gygi S.P."/>
        </authorList>
    </citation>
    <scope>PHOSPHORYLATION [LARGE SCALE ANALYSIS] AT SER-291</scope>
    <scope>IDENTIFICATION BY MASS SPECTROMETRY</scope>
</reference>
<reference key="5">
    <citation type="journal article" date="2016" name="J. Struct. Funct. Genomics">
        <title>Expression, purification, and crystallization of Schizosaccharomyces pombe eIF2B.</title>
        <authorList>
            <person name="Kashiwagi K."/>
            <person name="Shigeta T."/>
            <person name="Imataka H."/>
            <person name="Ito T."/>
            <person name="Yokoyama S."/>
        </authorList>
    </citation>
    <scope>FUNCTION</scope>
    <scope>SUBUNIT</scope>
    <scope>IDENTIFICATION IN THE EIF2B COMPLEX</scope>
</reference>
<reference evidence="7" key="6">
    <citation type="journal article" date="2016" name="Nature">
        <title>Crystal structure of eukaryotic translation initiation factor 2B.</title>
        <authorList>
            <person name="Kashiwagi K."/>
            <person name="Takahashi M."/>
            <person name="Nishimoto M."/>
            <person name="Hiyama T.B."/>
            <person name="Higo T."/>
            <person name="Umehara T."/>
            <person name="Sakamoto K."/>
            <person name="Ito T."/>
            <person name="Yokoyama S."/>
        </authorList>
    </citation>
    <scope>X-RAY CRYSTALLOGRAPHY (2.99 ANGSTROMS)</scope>
    <scope>FUNCTION</scope>
    <scope>SUBUNIT</scope>
    <scope>IDENTIFICATION IN THE EIF2B COMPLEX</scope>
</reference>
<reference evidence="8 9" key="7">
    <citation type="journal article" date="2019" name="Science">
        <title>Structural basis for eIF2B inhibition in integrated stress response.</title>
        <authorList>
            <person name="Kashiwagi K."/>
            <person name="Yokoyama T."/>
            <person name="Nishimoto M."/>
            <person name="Takahashi M."/>
            <person name="Sakamoto A."/>
            <person name="Yonemochi M."/>
            <person name="Shirouzu M."/>
            <person name="Ito T."/>
        </authorList>
    </citation>
    <scope>X-RAY CRYSTALLOGRAPHY (3.35 ANGSTROMS) IN COMPLEX WITH S.CEREVISIAE SUI2</scope>
    <scope>FUNCTION</scope>
    <scope>SUBUNIT</scope>
    <scope>IDENTIFICATION IN THE EIF2B COMPLEX</scope>
</reference>
<comment type="function">
    <text evidence="3 4 5">Acts as a component of the translation initiation factor 2B (eIF2B) complex, which catalyzes the exchange of GDP for GTP on the eukaryotic initiation factor 2 (eIF2) complex gamma subunit (PubMed:26901872, PubMed:27023709, PubMed:31048492). Its guanine nucleotide exchange factor activity is repressed when bound to eIF2 complex phosphorylated on the alpha subunit, thereby limiting the amount of methionyl-initiator methionine tRNA available to the ribosome and consequently global translation is repressed (PubMed:26901872, PubMed:31048492).</text>
</comment>
<comment type="subunit">
    <text evidence="3 4 5">Component of the translation initiation factor 2B (eIF2B) complex which is a heterodecamer of two sets of five different subunits: alpha, beta, gamma, delta and epsilon. Subunits alpha, beta and delta comprise a regulatory subcomplex and subunits epsilon and gamma comprise a catalytic subcomplex (PubMed:26901872, PubMed:27023709, PubMed:31048492). Within the complex, the hexameric regulatory complex resides at the center, with the two heterodimeric catalytic subcomplexes bound on opposite sides (PubMed:26901872, PubMed:31048492).</text>
</comment>
<comment type="subcellular location">
    <subcellularLocation>
        <location evidence="2">Cytoplasm</location>
        <location evidence="2">Cytosol</location>
    </subcellularLocation>
</comment>
<comment type="similarity">
    <text evidence="6">Belongs to the eIF-2B gamma/epsilon subunits family.</text>
</comment>
<dbReference type="EMBL" id="CU329670">
    <property type="protein sequence ID" value="CAB11281.2"/>
    <property type="molecule type" value="Genomic_DNA"/>
</dbReference>
<dbReference type="PIR" id="T38800">
    <property type="entry name" value="T38800"/>
</dbReference>
<dbReference type="RefSeq" id="NP_594962.2">
    <property type="nucleotide sequence ID" value="NM_001020393.2"/>
</dbReference>
<dbReference type="PDB" id="5B04">
    <property type="method" value="X-ray"/>
    <property type="resolution" value="2.99 A"/>
    <property type="chains" value="E/F=1-458"/>
</dbReference>
<dbReference type="PDB" id="6JLY">
    <property type="method" value="X-ray"/>
    <property type="resolution" value="3.50 A"/>
    <property type="chains" value="E/F=1-458"/>
</dbReference>
<dbReference type="PDB" id="6JLZ">
    <property type="method" value="X-ray"/>
    <property type="resolution" value="3.35 A"/>
    <property type="chains" value="E/F=1-458"/>
</dbReference>
<dbReference type="PDBsum" id="5B04"/>
<dbReference type="PDBsum" id="6JLY"/>
<dbReference type="PDBsum" id="6JLZ"/>
<dbReference type="SMR" id="P56288"/>
<dbReference type="BioGRID" id="280036">
    <property type="interactions" value="7"/>
</dbReference>
<dbReference type="DIP" id="DIP-61960N"/>
<dbReference type="FunCoup" id="P56288">
    <property type="interactions" value="382"/>
</dbReference>
<dbReference type="IntAct" id="P56288">
    <property type="interactions" value="3"/>
</dbReference>
<dbReference type="STRING" id="284812.P56288"/>
<dbReference type="iPTMnet" id="P56288"/>
<dbReference type="PaxDb" id="4896-SPAC4D7.09.1"/>
<dbReference type="EnsemblFungi" id="SPAC4D7.09.1">
    <property type="protein sequence ID" value="SPAC4D7.09.1:pep"/>
    <property type="gene ID" value="SPAC4D7.09"/>
</dbReference>
<dbReference type="GeneID" id="2543622"/>
<dbReference type="KEGG" id="spo:2543622"/>
<dbReference type="PomBase" id="SPAC4D7.09">
    <property type="gene designation" value="tif223"/>
</dbReference>
<dbReference type="VEuPathDB" id="FungiDB:SPAC4D7.09"/>
<dbReference type="eggNOG" id="KOG1462">
    <property type="taxonomic scope" value="Eukaryota"/>
</dbReference>
<dbReference type="HOGENOM" id="CLU_016743_3_0_1"/>
<dbReference type="InParanoid" id="P56288"/>
<dbReference type="OMA" id="NCVINPK"/>
<dbReference type="Reactome" id="R-SPO-72731">
    <property type="pathway name" value="Recycling of eIF2:GDP"/>
</dbReference>
<dbReference type="PRO" id="PR:P56288"/>
<dbReference type="Proteomes" id="UP000002485">
    <property type="component" value="Chromosome I"/>
</dbReference>
<dbReference type="GO" id="GO:0005829">
    <property type="term" value="C:cytosol"/>
    <property type="evidence" value="ECO:0007005"/>
    <property type="project" value="PomBase"/>
</dbReference>
<dbReference type="GO" id="GO:0005851">
    <property type="term" value="C:eukaryotic translation initiation factor 2B complex"/>
    <property type="evidence" value="ECO:0000314"/>
    <property type="project" value="PomBase"/>
</dbReference>
<dbReference type="GO" id="GO:0032045">
    <property type="term" value="C:guanyl-nucleotide exchange factor complex"/>
    <property type="evidence" value="ECO:0000318"/>
    <property type="project" value="GO_Central"/>
</dbReference>
<dbReference type="GO" id="GO:0005085">
    <property type="term" value="F:guanyl-nucleotide exchange factor activity"/>
    <property type="evidence" value="ECO:0000314"/>
    <property type="project" value="PomBase"/>
</dbReference>
<dbReference type="GO" id="GO:0003743">
    <property type="term" value="F:translation initiation factor activity"/>
    <property type="evidence" value="ECO:0000314"/>
    <property type="project" value="PomBase"/>
</dbReference>
<dbReference type="GO" id="GO:0002183">
    <property type="term" value="P:cytoplasmic translational initiation"/>
    <property type="evidence" value="ECO:0000314"/>
    <property type="project" value="PomBase"/>
</dbReference>
<dbReference type="CDD" id="cd04198">
    <property type="entry name" value="eIF-2B_gamma_N"/>
    <property type="match status" value="1"/>
</dbReference>
<dbReference type="CDD" id="cd04652">
    <property type="entry name" value="LbH_eIF2B_gamma_C"/>
    <property type="match status" value="1"/>
</dbReference>
<dbReference type="FunFam" id="2.160.10.10:FF:000045">
    <property type="entry name" value="Translation initiation factor eIF-2B subunit gamma"/>
    <property type="match status" value="1"/>
</dbReference>
<dbReference type="Gene3D" id="2.160.10.10">
    <property type="entry name" value="Hexapeptide repeat proteins"/>
    <property type="match status" value="1"/>
</dbReference>
<dbReference type="Gene3D" id="3.90.550.10">
    <property type="entry name" value="Spore Coat Polysaccharide Biosynthesis Protein SpsA, Chain A"/>
    <property type="match status" value="1"/>
</dbReference>
<dbReference type="InterPro" id="IPR051960">
    <property type="entry name" value="eIF2B_gamma"/>
</dbReference>
<dbReference type="InterPro" id="IPR005835">
    <property type="entry name" value="NTP_transferase_dom"/>
</dbReference>
<dbReference type="InterPro" id="IPR029044">
    <property type="entry name" value="Nucleotide-diphossugar_trans"/>
</dbReference>
<dbReference type="PANTHER" id="PTHR45989">
    <property type="entry name" value="TRANSLATION INITIATION FACTOR EIF-2B SUBUNIT GAMMA"/>
    <property type="match status" value="1"/>
</dbReference>
<dbReference type="PANTHER" id="PTHR45989:SF1">
    <property type="entry name" value="TRANSLATION INITIATION FACTOR EIF-2B SUBUNIT GAMMA"/>
    <property type="match status" value="1"/>
</dbReference>
<dbReference type="Pfam" id="PF25084">
    <property type="entry name" value="LbH_EIF2B"/>
    <property type="match status" value="1"/>
</dbReference>
<dbReference type="Pfam" id="PF00483">
    <property type="entry name" value="NTP_transferase"/>
    <property type="match status" value="1"/>
</dbReference>
<dbReference type="SUPFAM" id="SSF53448">
    <property type="entry name" value="Nucleotide-diphospho-sugar transferases"/>
    <property type="match status" value="1"/>
</dbReference>
<sequence length="458" mass="50462">MSLYEHAALPLASSPSILGPISGGRNRGNIQLQSIPIEFQAVVFAGFGNSLYPLTGSDALPKALLPIGNKPMLHYPLYWLEAAGFTSAILICMEEAEAHINAWLRSGYEGHMRIHVEAPTILDDSKSSADALRAVSHLIKNDFVCLSCDSIVGLPPIYGLDKFRLDNPSALAVYSPVLKYEHITSQSKEIDAKQLIGIEEKTSRLLYAKSSADVGSDFTFRMSLLWKHPRVTLNTNLSDAHIFVFKHWVIDLIREKESISSIRGDLIPYLVKCQYQKSFTVRENIQRFLSSPNNIDNYDGGLSSQEIKINALIAKDGIICSRANNLPNYFELNKCIAKLTPEQRLVDVTVSERALVGADCMVNEGTTIKDNSNIKKSIIGKNCVIGKGVVVSNSILMDNIVVEDGVRLESCIVASGAQIGAKSKLRECEIGVDHRVEAGRIARGERLVDMEKIETDMD</sequence>
<organism>
    <name type="scientific">Schizosaccharomyces pombe (strain 972 / ATCC 24843)</name>
    <name type="common">Fission yeast</name>
    <dbReference type="NCBI Taxonomy" id="284812"/>
    <lineage>
        <taxon>Eukaryota</taxon>
        <taxon>Fungi</taxon>
        <taxon>Dikarya</taxon>
        <taxon>Ascomycota</taxon>
        <taxon>Taphrinomycotina</taxon>
        <taxon>Schizosaccharomycetes</taxon>
        <taxon>Schizosaccharomycetales</taxon>
        <taxon>Schizosaccharomycetaceae</taxon>
        <taxon>Schizosaccharomyces</taxon>
    </lineage>
</organism>
<name>EI2BG_SCHPO</name>
<keyword id="KW-0002">3D-structure</keyword>
<keyword id="KW-0963">Cytoplasm</keyword>
<keyword id="KW-0396">Initiation factor</keyword>
<keyword id="KW-0597">Phosphoprotein</keyword>
<keyword id="KW-0648">Protein biosynthesis</keyword>
<keyword id="KW-1185">Reference proteome</keyword>
<gene>
    <name type="primary">tif223</name>
    <name type="ORF">SPAC4D7.09</name>
</gene>
<evidence type="ECO:0000250" key="1"/>
<evidence type="ECO:0000269" key="2">
    <source>
    </source>
</evidence>
<evidence type="ECO:0000269" key="3">
    <source>
    </source>
</evidence>
<evidence type="ECO:0000269" key="4">
    <source>
    </source>
</evidence>
<evidence type="ECO:0000269" key="5">
    <source>
    </source>
</evidence>
<evidence type="ECO:0000305" key="6"/>
<evidence type="ECO:0007744" key="7">
    <source>
        <dbReference type="PDB" id="5B04"/>
    </source>
</evidence>
<evidence type="ECO:0007744" key="8">
    <source>
        <dbReference type="PDB" id="6JLY"/>
    </source>
</evidence>
<evidence type="ECO:0007744" key="9">
    <source>
        <dbReference type="PDB" id="6JLZ"/>
    </source>
</evidence>
<evidence type="ECO:0007829" key="10">
    <source>
        <dbReference type="PDB" id="5B04"/>
    </source>
</evidence>
<evidence type="ECO:0007829" key="11">
    <source>
        <dbReference type="PDB" id="6JLY"/>
    </source>
</evidence>
<evidence type="ECO:0007829" key="12">
    <source>
        <dbReference type="PDB" id="6JLZ"/>
    </source>
</evidence>